<comment type="function">
    <text evidence="1">This protein binds to 23S rRNA in the presence of protein L20.</text>
</comment>
<comment type="subunit">
    <text evidence="1">Part of the 50S ribosomal subunit. Contacts protein L20.</text>
</comment>
<comment type="similarity">
    <text evidence="1">Belongs to the bacterial ribosomal protein bL21 family.</text>
</comment>
<gene>
    <name evidence="1" type="primary">rplU</name>
    <name type="ordered locus">xcc-b100_3189</name>
</gene>
<protein>
    <recommendedName>
        <fullName evidence="1">Large ribosomal subunit protein bL21</fullName>
    </recommendedName>
    <alternativeName>
        <fullName evidence="2">50S ribosomal protein L21</fullName>
    </alternativeName>
</protein>
<accession>B0RY34</accession>
<evidence type="ECO:0000255" key="1">
    <source>
        <dbReference type="HAMAP-Rule" id="MF_01363"/>
    </source>
</evidence>
<evidence type="ECO:0000305" key="2"/>
<feature type="chain" id="PRO_1000143871" description="Large ribosomal subunit protein bL21">
    <location>
        <begin position="1"/>
        <end position="106"/>
    </location>
</feature>
<keyword id="KW-0687">Ribonucleoprotein</keyword>
<keyword id="KW-0689">Ribosomal protein</keyword>
<keyword id="KW-0694">RNA-binding</keyword>
<keyword id="KW-0699">rRNA-binding</keyword>
<organism>
    <name type="scientific">Xanthomonas campestris pv. campestris (strain B100)</name>
    <dbReference type="NCBI Taxonomy" id="509169"/>
    <lineage>
        <taxon>Bacteria</taxon>
        <taxon>Pseudomonadati</taxon>
        <taxon>Pseudomonadota</taxon>
        <taxon>Gammaproteobacteria</taxon>
        <taxon>Lysobacterales</taxon>
        <taxon>Lysobacteraceae</taxon>
        <taxon>Xanthomonas</taxon>
    </lineage>
</organism>
<proteinExistence type="inferred from homology"/>
<reference key="1">
    <citation type="journal article" date="2008" name="J. Biotechnol.">
        <title>The genome of Xanthomonas campestris pv. campestris B100 and its use for the reconstruction of metabolic pathways involved in xanthan biosynthesis.</title>
        <authorList>
            <person name="Vorhoelter F.-J."/>
            <person name="Schneiker S."/>
            <person name="Goesmann A."/>
            <person name="Krause L."/>
            <person name="Bekel T."/>
            <person name="Kaiser O."/>
            <person name="Linke B."/>
            <person name="Patschkowski T."/>
            <person name="Rueckert C."/>
            <person name="Schmid J."/>
            <person name="Sidhu V.K."/>
            <person name="Sieber V."/>
            <person name="Tauch A."/>
            <person name="Watt S.A."/>
            <person name="Weisshaar B."/>
            <person name="Becker A."/>
            <person name="Niehaus K."/>
            <person name="Puehler A."/>
        </authorList>
    </citation>
    <scope>NUCLEOTIDE SEQUENCE [LARGE SCALE GENOMIC DNA]</scope>
    <source>
        <strain>B100</strain>
    </source>
</reference>
<dbReference type="EMBL" id="AM920689">
    <property type="protein sequence ID" value="CAP52554.1"/>
    <property type="molecule type" value="Genomic_DNA"/>
</dbReference>
<dbReference type="SMR" id="B0RY34"/>
<dbReference type="KEGG" id="xca:xcc-b100_3189"/>
<dbReference type="HOGENOM" id="CLU_061463_3_3_6"/>
<dbReference type="Proteomes" id="UP000001188">
    <property type="component" value="Chromosome"/>
</dbReference>
<dbReference type="GO" id="GO:0005737">
    <property type="term" value="C:cytoplasm"/>
    <property type="evidence" value="ECO:0007669"/>
    <property type="project" value="UniProtKB-ARBA"/>
</dbReference>
<dbReference type="GO" id="GO:1990904">
    <property type="term" value="C:ribonucleoprotein complex"/>
    <property type="evidence" value="ECO:0007669"/>
    <property type="project" value="UniProtKB-KW"/>
</dbReference>
<dbReference type="GO" id="GO:0005840">
    <property type="term" value="C:ribosome"/>
    <property type="evidence" value="ECO:0007669"/>
    <property type="project" value="UniProtKB-KW"/>
</dbReference>
<dbReference type="GO" id="GO:0019843">
    <property type="term" value="F:rRNA binding"/>
    <property type="evidence" value="ECO:0007669"/>
    <property type="project" value="UniProtKB-UniRule"/>
</dbReference>
<dbReference type="GO" id="GO:0003735">
    <property type="term" value="F:structural constituent of ribosome"/>
    <property type="evidence" value="ECO:0007669"/>
    <property type="project" value="InterPro"/>
</dbReference>
<dbReference type="GO" id="GO:0006412">
    <property type="term" value="P:translation"/>
    <property type="evidence" value="ECO:0007669"/>
    <property type="project" value="UniProtKB-UniRule"/>
</dbReference>
<dbReference type="HAMAP" id="MF_01363">
    <property type="entry name" value="Ribosomal_bL21"/>
    <property type="match status" value="1"/>
</dbReference>
<dbReference type="InterPro" id="IPR028909">
    <property type="entry name" value="bL21-like"/>
</dbReference>
<dbReference type="InterPro" id="IPR036164">
    <property type="entry name" value="bL21-like_sf"/>
</dbReference>
<dbReference type="InterPro" id="IPR001787">
    <property type="entry name" value="Ribosomal_bL21"/>
</dbReference>
<dbReference type="InterPro" id="IPR018258">
    <property type="entry name" value="Ribosomal_bL21_CS"/>
</dbReference>
<dbReference type="NCBIfam" id="TIGR00061">
    <property type="entry name" value="L21"/>
    <property type="match status" value="1"/>
</dbReference>
<dbReference type="PANTHER" id="PTHR21349">
    <property type="entry name" value="50S RIBOSOMAL PROTEIN L21"/>
    <property type="match status" value="1"/>
</dbReference>
<dbReference type="PANTHER" id="PTHR21349:SF0">
    <property type="entry name" value="LARGE RIBOSOMAL SUBUNIT PROTEIN BL21M"/>
    <property type="match status" value="1"/>
</dbReference>
<dbReference type="Pfam" id="PF00829">
    <property type="entry name" value="Ribosomal_L21p"/>
    <property type="match status" value="1"/>
</dbReference>
<dbReference type="SUPFAM" id="SSF141091">
    <property type="entry name" value="L21p-like"/>
    <property type="match status" value="1"/>
</dbReference>
<dbReference type="PROSITE" id="PS01169">
    <property type="entry name" value="RIBOSOMAL_L21"/>
    <property type="match status" value="1"/>
</dbReference>
<sequence length="106" mass="11824">MYAVLVTGGKQYRVAQGETLRVEKLEVEAGNEIKFDTILMLGDSDGIKLGDALKGASVTAKVVAHGRADKVRIIKFRRRKHHMKRQGHRQYYTEIEITGIAGGDKK</sequence>
<name>RL21_XANCB</name>